<organism>
    <name type="scientific">Aliivibrio fischeri (strain MJ11)</name>
    <name type="common">Vibrio fischeri</name>
    <dbReference type="NCBI Taxonomy" id="388396"/>
    <lineage>
        <taxon>Bacteria</taxon>
        <taxon>Pseudomonadati</taxon>
        <taxon>Pseudomonadota</taxon>
        <taxon>Gammaproteobacteria</taxon>
        <taxon>Vibrionales</taxon>
        <taxon>Vibrionaceae</taxon>
        <taxon>Aliivibrio</taxon>
    </lineage>
</organism>
<feature type="chain" id="PRO_1000192504" description="Polyribonucleotide nucleotidyltransferase">
    <location>
        <begin position="1"/>
        <end position="709"/>
    </location>
</feature>
<feature type="domain" description="KH" evidence="1">
    <location>
        <begin position="554"/>
        <end position="613"/>
    </location>
</feature>
<feature type="domain" description="S1 motif" evidence="1">
    <location>
        <begin position="623"/>
        <end position="691"/>
    </location>
</feature>
<feature type="binding site" evidence="1">
    <location>
        <position position="487"/>
    </location>
    <ligand>
        <name>Mg(2+)</name>
        <dbReference type="ChEBI" id="CHEBI:18420"/>
    </ligand>
</feature>
<feature type="binding site" evidence="1">
    <location>
        <position position="493"/>
    </location>
    <ligand>
        <name>Mg(2+)</name>
        <dbReference type="ChEBI" id="CHEBI:18420"/>
    </ligand>
</feature>
<name>PNP_ALIFM</name>
<dbReference type="EC" id="2.7.7.8" evidence="1"/>
<dbReference type="EMBL" id="CP001139">
    <property type="protein sequence ID" value="ACH67066.1"/>
    <property type="molecule type" value="Genomic_DNA"/>
</dbReference>
<dbReference type="RefSeq" id="WP_012534174.1">
    <property type="nucleotide sequence ID" value="NC_011184.1"/>
</dbReference>
<dbReference type="SMR" id="B5FA83"/>
<dbReference type="KEGG" id="vfm:VFMJ11_0491"/>
<dbReference type="HOGENOM" id="CLU_004217_2_2_6"/>
<dbReference type="Proteomes" id="UP000001857">
    <property type="component" value="Chromosome I"/>
</dbReference>
<dbReference type="GO" id="GO:0005829">
    <property type="term" value="C:cytosol"/>
    <property type="evidence" value="ECO:0007669"/>
    <property type="project" value="TreeGrafter"/>
</dbReference>
<dbReference type="GO" id="GO:0000175">
    <property type="term" value="F:3'-5'-RNA exonuclease activity"/>
    <property type="evidence" value="ECO:0007669"/>
    <property type="project" value="TreeGrafter"/>
</dbReference>
<dbReference type="GO" id="GO:0000287">
    <property type="term" value="F:magnesium ion binding"/>
    <property type="evidence" value="ECO:0007669"/>
    <property type="project" value="UniProtKB-UniRule"/>
</dbReference>
<dbReference type="GO" id="GO:0004654">
    <property type="term" value="F:polyribonucleotide nucleotidyltransferase activity"/>
    <property type="evidence" value="ECO:0007669"/>
    <property type="project" value="UniProtKB-UniRule"/>
</dbReference>
<dbReference type="GO" id="GO:0003723">
    <property type="term" value="F:RNA binding"/>
    <property type="evidence" value="ECO:0007669"/>
    <property type="project" value="UniProtKB-UniRule"/>
</dbReference>
<dbReference type="GO" id="GO:0006402">
    <property type="term" value="P:mRNA catabolic process"/>
    <property type="evidence" value="ECO:0007669"/>
    <property type="project" value="UniProtKB-UniRule"/>
</dbReference>
<dbReference type="GO" id="GO:0006396">
    <property type="term" value="P:RNA processing"/>
    <property type="evidence" value="ECO:0007669"/>
    <property type="project" value="InterPro"/>
</dbReference>
<dbReference type="CDD" id="cd02393">
    <property type="entry name" value="KH-I_PNPase"/>
    <property type="match status" value="1"/>
</dbReference>
<dbReference type="CDD" id="cd11363">
    <property type="entry name" value="RNase_PH_PNPase_1"/>
    <property type="match status" value="1"/>
</dbReference>
<dbReference type="CDD" id="cd11364">
    <property type="entry name" value="RNase_PH_PNPase_2"/>
    <property type="match status" value="1"/>
</dbReference>
<dbReference type="CDD" id="cd04472">
    <property type="entry name" value="S1_PNPase"/>
    <property type="match status" value="1"/>
</dbReference>
<dbReference type="FunFam" id="2.40.50.140:FF:000023">
    <property type="entry name" value="Polyribonucleotide nucleotidyltransferase"/>
    <property type="match status" value="1"/>
</dbReference>
<dbReference type="FunFam" id="3.30.1370.10:FF:000001">
    <property type="entry name" value="Polyribonucleotide nucleotidyltransferase"/>
    <property type="match status" value="1"/>
</dbReference>
<dbReference type="FunFam" id="3.30.230.70:FF:000001">
    <property type="entry name" value="Polyribonucleotide nucleotidyltransferase"/>
    <property type="match status" value="1"/>
</dbReference>
<dbReference type="FunFam" id="3.30.230.70:FF:000002">
    <property type="entry name" value="Polyribonucleotide nucleotidyltransferase"/>
    <property type="match status" value="1"/>
</dbReference>
<dbReference type="Gene3D" id="3.30.230.70">
    <property type="entry name" value="GHMP Kinase, N-terminal domain"/>
    <property type="match status" value="2"/>
</dbReference>
<dbReference type="Gene3D" id="3.30.1370.10">
    <property type="entry name" value="K Homology domain, type 1"/>
    <property type="match status" value="1"/>
</dbReference>
<dbReference type="Gene3D" id="2.40.50.140">
    <property type="entry name" value="Nucleic acid-binding proteins"/>
    <property type="match status" value="1"/>
</dbReference>
<dbReference type="HAMAP" id="MF_01595">
    <property type="entry name" value="PNPase"/>
    <property type="match status" value="1"/>
</dbReference>
<dbReference type="InterPro" id="IPR001247">
    <property type="entry name" value="ExoRNase_PH_dom1"/>
</dbReference>
<dbReference type="InterPro" id="IPR015847">
    <property type="entry name" value="ExoRNase_PH_dom2"/>
</dbReference>
<dbReference type="InterPro" id="IPR036345">
    <property type="entry name" value="ExoRNase_PH_dom2_sf"/>
</dbReference>
<dbReference type="InterPro" id="IPR004087">
    <property type="entry name" value="KH_dom"/>
</dbReference>
<dbReference type="InterPro" id="IPR004088">
    <property type="entry name" value="KH_dom_type_1"/>
</dbReference>
<dbReference type="InterPro" id="IPR036612">
    <property type="entry name" value="KH_dom_type_1_sf"/>
</dbReference>
<dbReference type="InterPro" id="IPR012340">
    <property type="entry name" value="NA-bd_OB-fold"/>
</dbReference>
<dbReference type="InterPro" id="IPR012162">
    <property type="entry name" value="PNPase"/>
</dbReference>
<dbReference type="InterPro" id="IPR027408">
    <property type="entry name" value="PNPase/RNase_PH_dom_sf"/>
</dbReference>
<dbReference type="InterPro" id="IPR015848">
    <property type="entry name" value="PNPase_PH_RNA-bd_bac/org-type"/>
</dbReference>
<dbReference type="InterPro" id="IPR020568">
    <property type="entry name" value="Ribosomal_Su5_D2-typ_SF"/>
</dbReference>
<dbReference type="InterPro" id="IPR003029">
    <property type="entry name" value="S1_domain"/>
</dbReference>
<dbReference type="NCBIfam" id="TIGR03591">
    <property type="entry name" value="polynuc_phos"/>
    <property type="match status" value="1"/>
</dbReference>
<dbReference type="NCBIfam" id="NF008805">
    <property type="entry name" value="PRK11824.1"/>
    <property type="match status" value="1"/>
</dbReference>
<dbReference type="PANTHER" id="PTHR11252">
    <property type="entry name" value="POLYRIBONUCLEOTIDE NUCLEOTIDYLTRANSFERASE"/>
    <property type="match status" value="1"/>
</dbReference>
<dbReference type="PANTHER" id="PTHR11252:SF0">
    <property type="entry name" value="POLYRIBONUCLEOTIDE NUCLEOTIDYLTRANSFERASE 1, MITOCHONDRIAL"/>
    <property type="match status" value="1"/>
</dbReference>
<dbReference type="Pfam" id="PF00013">
    <property type="entry name" value="KH_1"/>
    <property type="match status" value="1"/>
</dbReference>
<dbReference type="Pfam" id="PF03726">
    <property type="entry name" value="PNPase"/>
    <property type="match status" value="1"/>
</dbReference>
<dbReference type="Pfam" id="PF01138">
    <property type="entry name" value="RNase_PH"/>
    <property type="match status" value="2"/>
</dbReference>
<dbReference type="Pfam" id="PF03725">
    <property type="entry name" value="RNase_PH_C"/>
    <property type="match status" value="2"/>
</dbReference>
<dbReference type="Pfam" id="PF00575">
    <property type="entry name" value="S1"/>
    <property type="match status" value="1"/>
</dbReference>
<dbReference type="PIRSF" id="PIRSF005499">
    <property type="entry name" value="PNPase"/>
    <property type="match status" value="1"/>
</dbReference>
<dbReference type="SMART" id="SM00322">
    <property type="entry name" value="KH"/>
    <property type="match status" value="1"/>
</dbReference>
<dbReference type="SMART" id="SM00316">
    <property type="entry name" value="S1"/>
    <property type="match status" value="1"/>
</dbReference>
<dbReference type="SUPFAM" id="SSF54791">
    <property type="entry name" value="Eukaryotic type KH-domain (KH-domain type I)"/>
    <property type="match status" value="1"/>
</dbReference>
<dbReference type="SUPFAM" id="SSF50249">
    <property type="entry name" value="Nucleic acid-binding proteins"/>
    <property type="match status" value="1"/>
</dbReference>
<dbReference type="SUPFAM" id="SSF55666">
    <property type="entry name" value="Ribonuclease PH domain 2-like"/>
    <property type="match status" value="2"/>
</dbReference>
<dbReference type="SUPFAM" id="SSF54211">
    <property type="entry name" value="Ribosomal protein S5 domain 2-like"/>
    <property type="match status" value="2"/>
</dbReference>
<dbReference type="PROSITE" id="PS50084">
    <property type="entry name" value="KH_TYPE_1"/>
    <property type="match status" value="1"/>
</dbReference>
<dbReference type="PROSITE" id="PS50126">
    <property type="entry name" value="S1"/>
    <property type="match status" value="1"/>
</dbReference>
<reference key="1">
    <citation type="submission" date="2008-08" db="EMBL/GenBank/DDBJ databases">
        <title>Complete sequence of Vibrio fischeri strain MJ11.</title>
        <authorList>
            <person name="Mandel M.J."/>
            <person name="Stabb E.V."/>
            <person name="Ruby E.G."/>
            <person name="Ferriera S."/>
            <person name="Johnson J."/>
            <person name="Kravitz S."/>
            <person name="Beeson K."/>
            <person name="Sutton G."/>
            <person name="Rogers Y.-H."/>
            <person name="Friedman R."/>
            <person name="Frazier M."/>
            <person name="Venter J.C."/>
        </authorList>
    </citation>
    <scope>NUCLEOTIDE SEQUENCE [LARGE SCALE GENOMIC DNA]</scope>
    <source>
        <strain>MJ11</strain>
    </source>
</reference>
<evidence type="ECO:0000255" key="1">
    <source>
        <dbReference type="HAMAP-Rule" id="MF_01595"/>
    </source>
</evidence>
<sequence>MFANPVVKSFQYGNHTVTLETGVIARQATAAVMASMDDTSVFVSVVAKKEAVPGQDFFPLTVNYQERTYAAGKIPGGFFKREGRPSEAETLTARLIDRPIRPLFPDAFKNEVQVIATVVSINPEVNPDMITMIGTSAALAIAGIPFNGPIGAARVGHINGELVLNPSNTELENSKLDLVVSGTEGAVLMVESEADNLTEEEMLSAVVFGHDQQQVVIKAINEFAAEVATPAWDWVAPEENTVLNSRIAELAEAKLVEAYQITEKMTRYDRIHEIAAEVNEVLVSENEDVNLKEVHTIFHDLEKTVVRRSIIAGNPRIDGREKDMVRALDVRTGVLPRTHGSSLFTRGETQALVTATLGTQRDAQIIDSLMGEKKDHFLLHYNFPPYCVGETGFVGSPKRREIGHGKLAKRGIQAVMPSIEEFPYTVRVVSEITESNGSSSMASVCGTSLALMDAGVPIKASVAGIAMGLVKEGDDFVVLSDILGDEDHLGDMDFKVAGTNEGITALQMDIKIEGITKEIMQIALNQAQGARKHILKVMDEAISGAREDISEFAPRIHTMKISSDKIKDVIGKGGAVIRALCEETGTTIEIEDDGTIKIAATEGAAAKEAIRRIEEITAEVEVGKIYTGKVMRIVDFGAFVTVLGPKEGLVHISQIAEERIEKVADHLQVGQEVKTKVLEIDRQGRIRLSIKEANAELNPAPAAEAKDAE</sequence>
<proteinExistence type="inferred from homology"/>
<comment type="function">
    <text evidence="1">Involved in mRNA degradation. Catalyzes the phosphorolysis of single-stranded polyribonucleotides processively in the 3'- to 5'-direction.</text>
</comment>
<comment type="catalytic activity">
    <reaction evidence="1">
        <text>RNA(n+1) + phosphate = RNA(n) + a ribonucleoside 5'-diphosphate</text>
        <dbReference type="Rhea" id="RHEA:22096"/>
        <dbReference type="Rhea" id="RHEA-COMP:14527"/>
        <dbReference type="Rhea" id="RHEA-COMP:17342"/>
        <dbReference type="ChEBI" id="CHEBI:43474"/>
        <dbReference type="ChEBI" id="CHEBI:57930"/>
        <dbReference type="ChEBI" id="CHEBI:140395"/>
        <dbReference type="EC" id="2.7.7.8"/>
    </reaction>
</comment>
<comment type="cofactor">
    <cofactor evidence="1">
        <name>Mg(2+)</name>
        <dbReference type="ChEBI" id="CHEBI:18420"/>
    </cofactor>
</comment>
<comment type="subunit">
    <text evidence="1">Component of the RNA degradosome, which is a multiprotein complex involved in RNA processing and mRNA degradation.</text>
</comment>
<comment type="subcellular location">
    <subcellularLocation>
        <location evidence="1">Cytoplasm</location>
    </subcellularLocation>
</comment>
<comment type="similarity">
    <text evidence="1">Belongs to the polyribonucleotide nucleotidyltransferase family.</text>
</comment>
<gene>
    <name evidence="1" type="primary">pnp</name>
    <name type="ordered locus">VFMJ11_0491</name>
</gene>
<protein>
    <recommendedName>
        <fullName evidence="1">Polyribonucleotide nucleotidyltransferase</fullName>
        <ecNumber evidence="1">2.7.7.8</ecNumber>
    </recommendedName>
    <alternativeName>
        <fullName evidence="1">Polynucleotide phosphorylase</fullName>
        <shortName evidence="1">PNPase</shortName>
    </alternativeName>
</protein>
<accession>B5FA83</accession>
<keyword id="KW-0963">Cytoplasm</keyword>
<keyword id="KW-0460">Magnesium</keyword>
<keyword id="KW-0479">Metal-binding</keyword>
<keyword id="KW-0548">Nucleotidyltransferase</keyword>
<keyword id="KW-0694">RNA-binding</keyword>
<keyword id="KW-0808">Transferase</keyword>